<protein>
    <recommendedName>
        <fullName evidence="1">Transcription antitermination protein NusB</fullName>
    </recommendedName>
    <alternativeName>
        <fullName evidence="1">Antitermination factor NusB</fullName>
    </alternativeName>
</protein>
<comment type="function">
    <text evidence="1">Involved in transcription antitermination. Required for transcription of ribosomal RNA (rRNA) genes. Binds specifically to the boxA antiterminator sequence of the ribosomal RNA (rrn) operons.</text>
</comment>
<comment type="similarity">
    <text evidence="1">Belongs to the NusB family.</text>
</comment>
<sequence length="130" mass="15132">MKRRTARERAMQALYQMDITGELEPKVAVENTLDEGEETNEFLESLVVGFVENKEVIDEAIRQNLKKWKLERISIVDRSILRVAVYEMKYMEEIPHNVTINEAIEIAKTFGDEESRRFINGVLSNIKDTL</sequence>
<organism>
    <name type="scientific">Bacillus anthracis (strain CDC 684 / NRRL 3495)</name>
    <dbReference type="NCBI Taxonomy" id="568206"/>
    <lineage>
        <taxon>Bacteria</taxon>
        <taxon>Bacillati</taxon>
        <taxon>Bacillota</taxon>
        <taxon>Bacilli</taxon>
        <taxon>Bacillales</taxon>
        <taxon>Bacillaceae</taxon>
        <taxon>Bacillus</taxon>
        <taxon>Bacillus cereus group</taxon>
    </lineage>
</organism>
<reference key="1">
    <citation type="submission" date="2008-10" db="EMBL/GenBank/DDBJ databases">
        <title>Genome sequence of Bacillus anthracis str. CDC 684.</title>
        <authorList>
            <person name="Dodson R.J."/>
            <person name="Munk A.C."/>
            <person name="Brettin T."/>
            <person name="Bruce D."/>
            <person name="Detter C."/>
            <person name="Tapia R."/>
            <person name="Han C."/>
            <person name="Sutton G."/>
            <person name="Sims D."/>
        </authorList>
    </citation>
    <scope>NUCLEOTIDE SEQUENCE [LARGE SCALE GENOMIC DNA]</scope>
    <source>
        <strain>CDC 684 / NRRL 3495</strain>
    </source>
</reference>
<evidence type="ECO:0000255" key="1">
    <source>
        <dbReference type="HAMAP-Rule" id="MF_00073"/>
    </source>
</evidence>
<gene>
    <name evidence="1" type="primary">nusB</name>
    <name type="ordered locus">BAMEG_4441</name>
</gene>
<keyword id="KW-0694">RNA-binding</keyword>
<keyword id="KW-0804">Transcription</keyword>
<keyword id="KW-0889">Transcription antitermination</keyword>
<keyword id="KW-0805">Transcription regulation</keyword>
<dbReference type="EMBL" id="CP001215">
    <property type="protein sequence ID" value="ACP12893.1"/>
    <property type="molecule type" value="Genomic_DNA"/>
</dbReference>
<dbReference type="RefSeq" id="WP_000830249.1">
    <property type="nucleotide sequence ID" value="NC_012581.1"/>
</dbReference>
<dbReference type="SMR" id="C3LJV6"/>
<dbReference type="GeneID" id="93006920"/>
<dbReference type="KEGG" id="bah:BAMEG_4441"/>
<dbReference type="HOGENOM" id="CLU_087843_3_3_9"/>
<dbReference type="GO" id="GO:0005829">
    <property type="term" value="C:cytosol"/>
    <property type="evidence" value="ECO:0007669"/>
    <property type="project" value="TreeGrafter"/>
</dbReference>
<dbReference type="GO" id="GO:0003723">
    <property type="term" value="F:RNA binding"/>
    <property type="evidence" value="ECO:0007669"/>
    <property type="project" value="UniProtKB-UniRule"/>
</dbReference>
<dbReference type="GO" id="GO:0006353">
    <property type="term" value="P:DNA-templated transcription termination"/>
    <property type="evidence" value="ECO:0007669"/>
    <property type="project" value="UniProtKB-UniRule"/>
</dbReference>
<dbReference type="GO" id="GO:0031564">
    <property type="term" value="P:transcription antitermination"/>
    <property type="evidence" value="ECO:0007669"/>
    <property type="project" value="UniProtKB-KW"/>
</dbReference>
<dbReference type="CDD" id="cd00619">
    <property type="entry name" value="Terminator_NusB"/>
    <property type="match status" value="1"/>
</dbReference>
<dbReference type="FunFam" id="1.10.940.10:FF:000003">
    <property type="entry name" value="Transcription antitermination factor NusB"/>
    <property type="match status" value="1"/>
</dbReference>
<dbReference type="Gene3D" id="1.10.940.10">
    <property type="entry name" value="NusB-like"/>
    <property type="match status" value="1"/>
</dbReference>
<dbReference type="HAMAP" id="MF_00073">
    <property type="entry name" value="NusB"/>
    <property type="match status" value="1"/>
</dbReference>
<dbReference type="InterPro" id="IPR035926">
    <property type="entry name" value="NusB-like_sf"/>
</dbReference>
<dbReference type="InterPro" id="IPR011605">
    <property type="entry name" value="NusB_fam"/>
</dbReference>
<dbReference type="InterPro" id="IPR006027">
    <property type="entry name" value="NusB_RsmB_TIM44"/>
</dbReference>
<dbReference type="NCBIfam" id="TIGR01951">
    <property type="entry name" value="nusB"/>
    <property type="match status" value="1"/>
</dbReference>
<dbReference type="NCBIfam" id="NF001223">
    <property type="entry name" value="PRK00202.1-1"/>
    <property type="match status" value="1"/>
</dbReference>
<dbReference type="PANTHER" id="PTHR11078:SF3">
    <property type="entry name" value="ANTITERMINATION NUSB DOMAIN-CONTAINING PROTEIN"/>
    <property type="match status" value="1"/>
</dbReference>
<dbReference type="PANTHER" id="PTHR11078">
    <property type="entry name" value="N UTILIZATION SUBSTANCE PROTEIN B-RELATED"/>
    <property type="match status" value="1"/>
</dbReference>
<dbReference type="Pfam" id="PF01029">
    <property type="entry name" value="NusB"/>
    <property type="match status" value="1"/>
</dbReference>
<dbReference type="SUPFAM" id="SSF48013">
    <property type="entry name" value="NusB-like"/>
    <property type="match status" value="1"/>
</dbReference>
<accession>C3LJV6</accession>
<feature type="chain" id="PRO_1000192413" description="Transcription antitermination protein NusB">
    <location>
        <begin position="1"/>
        <end position="130"/>
    </location>
</feature>
<name>NUSB_BACAC</name>
<proteinExistence type="inferred from homology"/>